<organism>
    <name type="scientific">Canis lupus familiaris</name>
    <name type="common">Dog</name>
    <name type="synonym">Canis familiaris</name>
    <dbReference type="NCBI Taxonomy" id="9615"/>
    <lineage>
        <taxon>Eukaryota</taxon>
        <taxon>Metazoa</taxon>
        <taxon>Chordata</taxon>
        <taxon>Craniata</taxon>
        <taxon>Vertebrata</taxon>
        <taxon>Euteleostomi</taxon>
        <taxon>Mammalia</taxon>
        <taxon>Eutheria</taxon>
        <taxon>Laurasiatheria</taxon>
        <taxon>Carnivora</taxon>
        <taxon>Caniformia</taxon>
        <taxon>Canidae</taxon>
        <taxon>Canis</taxon>
    </lineage>
</organism>
<dbReference type="EMBL" id="AJ388551">
    <property type="protein sequence ID" value="CAB65543.1"/>
    <property type="molecule type" value="mRNA"/>
</dbReference>
<dbReference type="RefSeq" id="NP_001002953.1">
    <property type="nucleotide sequence ID" value="NM_001002953.1"/>
</dbReference>
<dbReference type="SMR" id="Q9TSZ2"/>
<dbReference type="ELM" id="Q9TSZ2"/>
<dbReference type="FunCoup" id="Q9TSZ2">
    <property type="interactions" value="77"/>
</dbReference>
<dbReference type="STRING" id="9615.ENSCAFP00000012336"/>
<dbReference type="PaxDb" id="9612-ENSCAFP00000012336"/>
<dbReference type="Ensembl" id="ENSCAFT00000013332.5">
    <property type="protein sequence ID" value="ENSCAFP00000012336.5"/>
    <property type="gene ID" value="ENSCAFG00000008391.5"/>
</dbReference>
<dbReference type="Ensembl" id="ENSCAFT00030022614.1">
    <property type="protein sequence ID" value="ENSCAFP00030019729.1"/>
    <property type="gene ID" value="ENSCAFG00030012192.1"/>
</dbReference>
<dbReference type="Ensembl" id="ENSCAFT00845052586.1">
    <property type="protein sequence ID" value="ENSCAFP00845041270.1"/>
    <property type="gene ID" value="ENSCAFG00845029695.1"/>
</dbReference>
<dbReference type="GeneID" id="403420"/>
<dbReference type="KEGG" id="cfa:403420"/>
<dbReference type="CTD" id="23462"/>
<dbReference type="VEuPathDB" id="HostDB:ENSCAFG00845029695"/>
<dbReference type="VGNC" id="VGNC:54114">
    <property type="gene designation" value="HEY1"/>
</dbReference>
<dbReference type="eggNOG" id="KOG4304">
    <property type="taxonomic scope" value="Eukaryota"/>
</dbReference>
<dbReference type="GeneTree" id="ENSGT00940000157068"/>
<dbReference type="InParanoid" id="Q9TSZ2"/>
<dbReference type="OrthoDB" id="6371181at2759"/>
<dbReference type="Proteomes" id="UP000002254">
    <property type="component" value="Chromosome 29"/>
</dbReference>
<dbReference type="Proteomes" id="UP000694429">
    <property type="component" value="Chromosome 29"/>
</dbReference>
<dbReference type="Proteomes" id="UP000694542">
    <property type="component" value="Unplaced"/>
</dbReference>
<dbReference type="Proteomes" id="UP000805418">
    <property type="component" value="Chromosome 29"/>
</dbReference>
<dbReference type="GO" id="GO:0005634">
    <property type="term" value="C:nucleus"/>
    <property type="evidence" value="ECO:0007669"/>
    <property type="project" value="UniProtKB-SubCell"/>
</dbReference>
<dbReference type="GO" id="GO:0000987">
    <property type="term" value="F:cis-regulatory region sequence-specific DNA binding"/>
    <property type="evidence" value="ECO:0007669"/>
    <property type="project" value="Ensembl"/>
</dbReference>
<dbReference type="GO" id="GO:0001227">
    <property type="term" value="F:DNA-binding transcription repressor activity, RNA polymerase II-specific"/>
    <property type="evidence" value="ECO:0007669"/>
    <property type="project" value="Ensembl"/>
</dbReference>
<dbReference type="GO" id="GO:0046983">
    <property type="term" value="F:protein dimerization activity"/>
    <property type="evidence" value="ECO:0007669"/>
    <property type="project" value="InterPro"/>
</dbReference>
<dbReference type="GO" id="GO:0061629">
    <property type="term" value="F:RNA polymerase II-specific DNA-binding transcription factor binding"/>
    <property type="evidence" value="ECO:0007669"/>
    <property type="project" value="Ensembl"/>
</dbReference>
<dbReference type="GO" id="GO:0001525">
    <property type="term" value="P:angiogenesis"/>
    <property type="evidence" value="ECO:0007669"/>
    <property type="project" value="Ensembl"/>
</dbReference>
<dbReference type="GO" id="GO:0045746">
    <property type="term" value="P:negative regulation of Notch signaling pathway"/>
    <property type="evidence" value="ECO:0007669"/>
    <property type="project" value="Ensembl"/>
</dbReference>
<dbReference type="GO" id="GO:0051151">
    <property type="term" value="P:negative regulation of smooth muscle cell differentiation"/>
    <property type="evidence" value="ECO:0007669"/>
    <property type="project" value="Ensembl"/>
</dbReference>
<dbReference type="GO" id="GO:0007219">
    <property type="term" value="P:Notch signaling pathway"/>
    <property type="evidence" value="ECO:0000250"/>
    <property type="project" value="UniProtKB"/>
</dbReference>
<dbReference type="FunFam" id="4.10.280.10:FF:000012">
    <property type="entry name" value="hairy/enhancer-of-split related with YRPW motif protein 1"/>
    <property type="match status" value="1"/>
</dbReference>
<dbReference type="Gene3D" id="6.10.250.980">
    <property type="match status" value="1"/>
</dbReference>
<dbReference type="Gene3D" id="4.10.280.10">
    <property type="entry name" value="Helix-loop-helix DNA-binding domain"/>
    <property type="match status" value="1"/>
</dbReference>
<dbReference type="InterPro" id="IPR011598">
    <property type="entry name" value="bHLH_dom"/>
</dbReference>
<dbReference type="InterPro" id="IPR050370">
    <property type="entry name" value="HES_HEY"/>
</dbReference>
<dbReference type="InterPro" id="IPR036638">
    <property type="entry name" value="HLH_DNA-bd_sf"/>
</dbReference>
<dbReference type="InterPro" id="IPR003650">
    <property type="entry name" value="Orange_dom"/>
</dbReference>
<dbReference type="PANTHER" id="PTHR10985">
    <property type="entry name" value="BASIC HELIX-LOOP-HELIX TRANSCRIPTION FACTOR, HES-RELATED"/>
    <property type="match status" value="1"/>
</dbReference>
<dbReference type="Pfam" id="PF07527">
    <property type="entry name" value="Hairy_orange"/>
    <property type="match status" value="1"/>
</dbReference>
<dbReference type="Pfam" id="PF00010">
    <property type="entry name" value="HLH"/>
    <property type="match status" value="1"/>
</dbReference>
<dbReference type="SMART" id="SM00353">
    <property type="entry name" value="HLH"/>
    <property type="match status" value="1"/>
</dbReference>
<dbReference type="SMART" id="SM00511">
    <property type="entry name" value="ORANGE"/>
    <property type="match status" value="1"/>
</dbReference>
<dbReference type="SUPFAM" id="SSF47459">
    <property type="entry name" value="HLH, helix-loop-helix DNA-binding domain"/>
    <property type="match status" value="1"/>
</dbReference>
<dbReference type="SUPFAM" id="SSF158457">
    <property type="entry name" value="Orange domain-like"/>
    <property type="match status" value="1"/>
</dbReference>
<dbReference type="PROSITE" id="PS50888">
    <property type="entry name" value="BHLH"/>
    <property type="match status" value="1"/>
</dbReference>
<dbReference type="PROSITE" id="PS51054">
    <property type="entry name" value="ORANGE"/>
    <property type="match status" value="1"/>
</dbReference>
<reference key="1">
    <citation type="journal article" date="2000" name="Anal. Biochem.">
        <title>A method for the large-scale cloning of nuclear proteins and nuclear targeting sequences on a functional basis.</title>
        <authorList>
            <person name="Pichon B."/>
            <person name="Mercan D."/>
            <person name="Pouillon V."/>
            <person name="Christophe-Hobertus C."/>
            <person name="Christophe D."/>
        </authorList>
    </citation>
    <scope>NUCLEOTIDE SEQUENCE [LARGE SCALE MRNA]</scope>
    <scope>SUBCELLULAR LOCATION</scope>
    <source>
        <tissue>Thyroid</tissue>
    </source>
</reference>
<feature type="chain" id="PRO_0000127216" description="Hairy/enhancer-of-split related with YRPW motif protein 1">
    <location>
        <begin position="1"/>
        <end position="304"/>
    </location>
</feature>
<feature type="domain" description="bHLH" evidence="5">
    <location>
        <begin position="49"/>
        <end position="104"/>
    </location>
</feature>
<feature type="domain" description="Orange" evidence="4">
    <location>
        <begin position="122"/>
        <end position="158"/>
    </location>
</feature>
<feature type="region of interest" description="Disordered" evidence="6">
    <location>
        <begin position="1"/>
        <end position="52"/>
    </location>
</feature>
<feature type="region of interest" description="Transcriptional repression and interaction with NCOR1 and SIN3A" evidence="1">
    <location>
        <begin position="48"/>
        <end position="117"/>
    </location>
</feature>
<feature type="region of interest" description="Disordered" evidence="6">
    <location>
        <begin position="191"/>
        <end position="234"/>
    </location>
</feature>
<feature type="compositionally biased region" description="Polar residues" evidence="6">
    <location>
        <begin position="28"/>
        <end position="47"/>
    </location>
</feature>
<feature type="compositionally biased region" description="Polar residues" evidence="6">
    <location>
        <begin position="200"/>
        <end position="210"/>
    </location>
</feature>
<feature type="compositionally biased region" description="Low complexity" evidence="6">
    <location>
        <begin position="218"/>
        <end position="234"/>
    </location>
</feature>
<comment type="function">
    <text evidence="2 3">Transcriptional repressor which binds preferentially to the canonical E box sequence 5'-CACGTG-3'. Downstream effector of Notch signaling required for cardiovascular development. Specifically required for the Notch-induced endocardial epithelial to mesenchymal transition, which is itself criticial for cardiac valve and septum development. May be required in conjunction with HEY2 to specify arterial cell fate or identity. Promotes maintenance of neuronal precursor cells and glial versus neuronal fate specification. Represses transcription by the cardiac transcriptional activators GATA4 and GATA6 and by the neuronal bHLH factors ASCL1/MASH1 and NEUROD4/MATH3.</text>
</comment>
<comment type="subunit">
    <text evidence="1">Self-associates. Interacts with HES1 and HEYL. Interacts with HDAC1, NCOR1 and SIN3A. Interacts with GATA4 and GATA6. Interacts with CCDC89/BOIP.</text>
</comment>
<comment type="subcellular location">
    <subcellularLocation>
        <location evidence="4 5 7">Nucleus</location>
    </subcellularLocation>
</comment>
<comment type="similarity">
    <text evidence="8">Belongs to the HEY family.</text>
</comment>
<protein>
    <recommendedName>
        <fullName>Hairy/enhancer-of-split related with YRPW motif protein 1</fullName>
    </recommendedName>
    <alternativeName>
        <fullName>Hairy and enhancer of split-related protein 1</fullName>
        <shortName>HESR-1</shortName>
    </alternativeName>
</protein>
<proteinExistence type="evidence at transcript level"/>
<gene>
    <name type="primary">HEY1</name>
    <name type="synonym">HESR1</name>
    <name type="ORF">BC8</name>
</gene>
<name>HEY1_CANLF</name>
<sequence>MKRAHPDYSSSDSELDETVEVEKESADENGNLSSALGSMSPTTSSQILARKRRRGIIEKRRRDRINNSLSELRRLVPSAFEKQGSAKLEKAEILQMTVDHLKMLHTAGGKGYFDAHALAMDYRSLGFRECLAEVARYLSIIEGLDASDPLRVRLVSHLNNYASQREAASGAHAGLGHLPWGSAFGHHPHVAHPLLLPQSGHGNTGTSASPTDPHHQGRLAAAHPEAPALRAPPSGGLGPVLPVVTSASKLSPPLLSSVASLSAFPFSFGSFHLLSPNALSPSAPTQAANLGKPYRPWGTEIGAF</sequence>
<keyword id="KW-0217">Developmental protein</keyword>
<keyword id="KW-0238">DNA-binding</keyword>
<keyword id="KW-0914">Notch signaling pathway</keyword>
<keyword id="KW-0539">Nucleus</keyword>
<keyword id="KW-1185">Reference proteome</keyword>
<keyword id="KW-0678">Repressor</keyword>
<keyword id="KW-0804">Transcription</keyword>
<keyword id="KW-0805">Transcription regulation</keyword>
<evidence type="ECO:0000250" key="1"/>
<evidence type="ECO:0000250" key="2">
    <source>
        <dbReference type="UniProtKB" id="Q9WV93"/>
    </source>
</evidence>
<evidence type="ECO:0000250" key="3">
    <source>
        <dbReference type="UniProtKB" id="Q9Y5J3"/>
    </source>
</evidence>
<evidence type="ECO:0000255" key="4">
    <source>
        <dbReference type="PROSITE-ProRule" id="PRU00380"/>
    </source>
</evidence>
<evidence type="ECO:0000255" key="5">
    <source>
        <dbReference type="PROSITE-ProRule" id="PRU00981"/>
    </source>
</evidence>
<evidence type="ECO:0000256" key="6">
    <source>
        <dbReference type="SAM" id="MobiDB-lite"/>
    </source>
</evidence>
<evidence type="ECO:0000269" key="7">
    <source>
    </source>
</evidence>
<evidence type="ECO:0000305" key="8"/>
<accession>Q9TSZ2</accession>